<reference key="1">
    <citation type="submission" date="2007-02" db="EMBL/GenBank/DDBJ databases">
        <title>Complete sequence of Mycobacterium sp. JLS.</title>
        <authorList>
            <consortium name="US DOE Joint Genome Institute"/>
            <person name="Copeland A."/>
            <person name="Lucas S."/>
            <person name="Lapidus A."/>
            <person name="Barry K."/>
            <person name="Detter J.C."/>
            <person name="Glavina del Rio T."/>
            <person name="Hammon N."/>
            <person name="Israni S."/>
            <person name="Dalin E."/>
            <person name="Tice H."/>
            <person name="Pitluck S."/>
            <person name="Chain P."/>
            <person name="Malfatti S."/>
            <person name="Shin M."/>
            <person name="Vergez L."/>
            <person name="Schmutz J."/>
            <person name="Larimer F."/>
            <person name="Land M."/>
            <person name="Hauser L."/>
            <person name="Kyrpides N."/>
            <person name="Mikhailova N."/>
            <person name="Miller C.D."/>
            <person name="Anderson A.J."/>
            <person name="Sims R.C."/>
            <person name="Richardson P."/>
        </authorList>
    </citation>
    <scope>NUCLEOTIDE SEQUENCE [LARGE SCALE GENOMIC DNA]</scope>
    <source>
        <strain>JLS</strain>
    </source>
</reference>
<organism>
    <name type="scientific">Mycobacterium sp. (strain JLS)</name>
    <dbReference type="NCBI Taxonomy" id="164757"/>
    <lineage>
        <taxon>Bacteria</taxon>
        <taxon>Bacillati</taxon>
        <taxon>Actinomycetota</taxon>
        <taxon>Actinomycetes</taxon>
        <taxon>Mycobacteriales</taxon>
        <taxon>Mycobacteriaceae</taxon>
        <taxon>Mycobacterium</taxon>
    </lineage>
</organism>
<name>Y1073_MYCSJ</name>
<accession>A3PVF3</accession>
<proteinExistence type="inferred from homology"/>
<dbReference type="EC" id="2.1.1.-"/>
<dbReference type="EMBL" id="CP000580">
    <property type="protein sequence ID" value="ABN96880.1"/>
    <property type="molecule type" value="Genomic_DNA"/>
</dbReference>
<dbReference type="SMR" id="A3PVF3"/>
<dbReference type="KEGG" id="mjl:Mjls_1073"/>
<dbReference type="HOGENOM" id="CLU_056160_2_1_11"/>
<dbReference type="BioCyc" id="MSP164757:G1G8C-1086-MONOMER"/>
<dbReference type="GO" id="GO:0008168">
    <property type="term" value="F:methyltransferase activity"/>
    <property type="evidence" value="ECO:0007669"/>
    <property type="project" value="UniProtKB-KW"/>
</dbReference>
<dbReference type="GO" id="GO:0032259">
    <property type="term" value="P:methylation"/>
    <property type="evidence" value="ECO:0007669"/>
    <property type="project" value="UniProtKB-KW"/>
</dbReference>
<dbReference type="FunFam" id="3.40.50.150:FF:000152">
    <property type="entry name" value="S-adenosyl-L-methionine-dependent methyltransferase"/>
    <property type="match status" value="1"/>
</dbReference>
<dbReference type="Gene3D" id="3.40.50.150">
    <property type="entry name" value="Vaccinia Virus protein VP39"/>
    <property type="match status" value="1"/>
</dbReference>
<dbReference type="InterPro" id="IPR007213">
    <property type="entry name" value="Ppm1/Ppm2/Tcmp"/>
</dbReference>
<dbReference type="InterPro" id="IPR029063">
    <property type="entry name" value="SAM-dependent_MTases_sf"/>
</dbReference>
<dbReference type="InterPro" id="IPR011610">
    <property type="entry name" value="SAM_mthyl_Trfase_ML2640-like"/>
</dbReference>
<dbReference type="NCBIfam" id="TIGR00027">
    <property type="entry name" value="mthyl_TIGR00027"/>
    <property type="match status" value="1"/>
</dbReference>
<dbReference type="PANTHER" id="PTHR43619">
    <property type="entry name" value="S-ADENOSYL-L-METHIONINE-DEPENDENT METHYLTRANSFERASE YKTD-RELATED"/>
    <property type="match status" value="1"/>
</dbReference>
<dbReference type="PANTHER" id="PTHR43619:SF2">
    <property type="entry name" value="S-ADENOSYL-L-METHIONINE-DEPENDENT METHYLTRANSFERASES SUPERFAMILY PROTEIN"/>
    <property type="match status" value="1"/>
</dbReference>
<dbReference type="Pfam" id="PF04072">
    <property type="entry name" value="LCM"/>
    <property type="match status" value="1"/>
</dbReference>
<dbReference type="SUPFAM" id="SSF53335">
    <property type="entry name" value="S-adenosyl-L-methionine-dependent methyltransferases"/>
    <property type="match status" value="1"/>
</dbReference>
<comment type="function">
    <text evidence="1">Exhibits S-adenosyl-L-methionine-dependent methyltransferase activity.</text>
</comment>
<comment type="similarity">
    <text evidence="2">Belongs to the UPF0677 family.</text>
</comment>
<gene>
    <name type="ordered locus">Mjls_1073</name>
</gene>
<protein>
    <recommendedName>
        <fullName>Putative S-adenosyl-L-methionine-dependent methyltransferase Mjls_1073</fullName>
        <ecNumber>2.1.1.-</ecNumber>
    </recommendedName>
</protein>
<feature type="chain" id="PRO_0000361205" description="Putative S-adenosyl-L-methionine-dependent methyltransferase Mjls_1073">
    <location>
        <begin position="1"/>
        <end position="308"/>
    </location>
</feature>
<feature type="binding site" evidence="1">
    <location>
        <position position="133"/>
    </location>
    <ligand>
        <name>S-adenosyl-L-methionine</name>
        <dbReference type="ChEBI" id="CHEBI:59789"/>
    </ligand>
</feature>
<feature type="binding site" evidence="1">
    <location>
        <begin position="162"/>
        <end position="163"/>
    </location>
    <ligand>
        <name>S-adenosyl-L-methionine</name>
        <dbReference type="ChEBI" id="CHEBI:59789"/>
    </ligand>
</feature>
<evidence type="ECO:0000250" key="1"/>
<evidence type="ECO:0000305" key="2"/>
<keyword id="KW-0489">Methyltransferase</keyword>
<keyword id="KW-0949">S-adenosyl-L-methionine</keyword>
<keyword id="KW-0808">Transferase</keyword>
<sequence length="308" mass="33264">MARTDNDTWDLASSVGATATMVAAARAVATRAPDAVIDDPFAEPLVRAVGVDFFTRLATGDLTPTDLDPDATGGAGNMDRFADGMAARTRFFDDFFSDAADAGVRQAVILASGLDSRAYRLPWPAGTVVFEIDQPGVITFKSDTLARLGAKPTADHRTVPVDLRDDWIGALEAAGFDRTEPSAWIAEGLFGYLPPEAQDRLLDQITELSPPGSRLAVEGVVSSPDADDEQIRERMQAVRDQWRQFGFDLDFSELVYTGERAEVAAYLGERGWRTDSITATALLEKCGLQSAEDSSANFADVRYVTAVK</sequence>